<feature type="chain" id="PRO_0000152144" description="Leucine--tRNA ligase 1">
    <location>
        <begin position="1"/>
        <end position="934"/>
    </location>
</feature>
<feature type="short sequence motif" description="'HIGH' region">
    <location>
        <begin position="41"/>
        <end position="51"/>
    </location>
</feature>
<feature type="short sequence motif" description="'KMSKS' region">
    <location>
        <begin position="616"/>
        <end position="620"/>
    </location>
</feature>
<feature type="binding site" evidence="1">
    <location>
        <position position="619"/>
    </location>
    <ligand>
        <name>ATP</name>
        <dbReference type="ChEBI" id="CHEBI:30616"/>
    </ligand>
</feature>
<dbReference type="EC" id="6.1.1.4" evidence="1"/>
<dbReference type="EMBL" id="AE006641">
    <property type="protein sequence ID" value="AAK40823.1"/>
    <property type="molecule type" value="Genomic_DNA"/>
</dbReference>
<dbReference type="PIR" id="H90195">
    <property type="entry name" value="H90195"/>
</dbReference>
<dbReference type="SMR" id="P58176"/>
<dbReference type="FunCoup" id="P58176">
    <property type="interactions" value="281"/>
</dbReference>
<dbReference type="STRING" id="273057.SSO0504"/>
<dbReference type="PaxDb" id="273057-SSO0504"/>
<dbReference type="EnsemblBacteria" id="AAK40823">
    <property type="protein sequence ID" value="AAK40823"/>
    <property type="gene ID" value="SSO0504"/>
</dbReference>
<dbReference type="KEGG" id="sso:SSO0504"/>
<dbReference type="PATRIC" id="fig|273057.12.peg.498"/>
<dbReference type="eggNOG" id="arCOG00809">
    <property type="taxonomic scope" value="Archaea"/>
</dbReference>
<dbReference type="HOGENOM" id="CLU_004174_0_0_2"/>
<dbReference type="InParanoid" id="P58176"/>
<dbReference type="PhylomeDB" id="P58176"/>
<dbReference type="Proteomes" id="UP000001974">
    <property type="component" value="Chromosome"/>
</dbReference>
<dbReference type="GO" id="GO:0005737">
    <property type="term" value="C:cytoplasm"/>
    <property type="evidence" value="ECO:0007669"/>
    <property type="project" value="UniProtKB-SubCell"/>
</dbReference>
<dbReference type="GO" id="GO:0002161">
    <property type="term" value="F:aminoacyl-tRNA deacylase activity"/>
    <property type="evidence" value="ECO:0007669"/>
    <property type="project" value="InterPro"/>
</dbReference>
<dbReference type="GO" id="GO:0005524">
    <property type="term" value="F:ATP binding"/>
    <property type="evidence" value="ECO:0007669"/>
    <property type="project" value="UniProtKB-UniRule"/>
</dbReference>
<dbReference type="GO" id="GO:0004823">
    <property type="term" value="F:leucine-tRNA ligase activity"/>
    <property type="evidence" value="ECO:0000318"/>
    <property type="project" value="GO_Central"/>
</dbReference>
<dbReference type="GO" id="GO:0006429">
    <property type="term" value="P:leucyl-tRNA aminoacylation"/>
    <property type="evidence" value="ECO:0000318"/>
    <property type="project" value="GO_Central"/>
</dbReference>
<dbReference type="CDD" id="cd07959">
    <property type="entry name" value="Anticodon_Ia_Leu_AEc"/>
    <property type="match status" value="1"/>
</dbReference>
<dbReference type="FunFam" id="3.90.740.10:FF:000045">
    <property type="entry name" value="Leucine--tRNA ligase"/>
    <property type="match status" value="1"/>
</dbReference>
<dbReference type="Gene3D" id="3.30.2320.20">
    <property type="entry name" value="Class I aminoacyl-tRNA synthetases (RS)"/>
    <property type="match status" value="1"/>
</dbReference>
<dbReference type="Gene3D" id="3.40.50.620">
    <property type="entry name" value="HUPs"/>
    <property type="match status" value="1"/>
</dbReference>
<dbReference type="Gene3D" id="1.10.730.10">
    <property type="entry name" value="Isoleucyl-tRNA Synthetase, Domain 1"/>
    <property type="match status" value="1"/>
</dbReference>
<dbReference type="Gene3D" id="1.10.10.720">
    <property type="entry name" value="leucyl-tRNA synthetase"/>
    <property type="match status" value="1"/>
</dbReference>
<dbReference type="Gene3D" id="3.90.740.10">
    <property type="entry name" value="Valyl/Leucyl/Isoleucyl-tRNA synthetase, editing domain"/>
    <property type="match status" value="1"/>
</dbReference>
<dbReference type="HAMAP" id="MF_00049_A">
    <property type="entry name" value="Leu_tRNA_synth_A"/>
    <property type="match status" value="1"/>
</dbReference>
<dbReference type="InterPro" id="IPR002300">
    <property type="entry name" value="aa-tRNA-synth_Ia"/>
</dbReference>
<dbReference type="InterPro" id="IPR020791">
    <property type="entry name" value="Leu-tRNA-lgase_arc"/>
</dbReference>
<dbReference type="InterPro" id="IPR004493">
    <property type="entry name" value="Leu-tRNA-synth_Ia_arc/euk"/>
</dbReference>
<dbReference type="InterPro" id="IPR013155">
    <property type="entry name" value="M/V/L/I-tRNA-synth_anticd-bd"/>
</dbReference>
<dbReference type="InterPro" id="IPR014729">
    <property type="entry name" value="Rossmann-like_a/b/a_fold"/>
</dbReference>
<dbReference type="InterPro" id="IPR009080">
    <property type="entry name" value="tRNAsynth_Ia_anticodon-bd"/>
</dbReference>
<dbReference type="InterPro" id="IPR009008">
    <property type="entry name" value="Val/Leu/Ile-tRNA-synth_edit"/>
</dbReference>
<dbReference type="NCBIfam" id="TIGR00395">
    <property type="entry name" value="leuS_arch"/>
    <property type="match status" value="1"/>
</dbReference>
<dbReference type="NCBIfam" id="NF008957">
    <property type="entry name" value="PRK12300.1"/>
    <property type="match status" value="1"/>
</dbReference>
<dbReference type="PANTHER" id="PTHR45794:SF1">
    <property type="entry name" value="LEUCINE--TRNA LIGASE, CYTOPLASMIC"/>
    <property type="match status" value="1"/>
</dbReference>
<dbReference type="PANTHER" id="PTHR45794">
    <property type="entry name" value="LEUCYL-TRNA SYNTHETASE"/>
    <property type="match status" value="1"/>
</dbReference>
<dbReference type="Pfam" id="PF08264">
    <property type="entry name" value="Anticodon_1"/>
    <property type="match status" value="1"/>
</dbReference>
<dbReference type="Pfam" id="PF00133">
    <property type="entry name" value="tRNA-synt_1"/>
    <property type="match status" value="1"/>
</dbReference>
<dbReference type="SUPFAM" id="SSF47323">
    <property type="entry name" value="Anticodon-binding domain of a subclass of class I aminoacyl-tRNA synthetases"/>
    <property type="match status" value="1"/>
</dbReference>
<dbReference type="SUPFAM" id="SSF52374">
    <property type="entry name" value="Nucleotidylyl transferase"/>
    <property type="match status" value="1"/>
</dbReference>
<dbReference type="SUPFAM" id="SSF50677">
    <property type="entry name" value="ValRS/IleRS/LeuRS editing domain"/>
    <property type="match status" value="1"/>
</dbReference>
<keyword id="KW-0030">Aminoacyl-tRNA synthetase</keyword>
<keyword id="KW-0067">ATP-binding</keyword>
<keyword id="KW-0963">Cytoplasm</keyword>
<keyword id="KW-0436">Ligase</keyword>
<keyword id="KW-0547">Nucleotide-binding</keyword>
<keyword id="KW-0648">Protein biosynthesis</keyword>
<keyword id="KW-1185">Reference proteome</keyword>
<reference key="1">
    <citation type="journal article" date="2001" name="Proc. Natl. Acad. Sci. U.S.A.">
        <title>The complete genome of the crenarchaeon Sulfolobus solfataricus P2.</title>
        <authorList>
            <person name="She Q."/>
            <person name="Singh R.K."/>
            <person name="Confalonieri F."/>
            <person name="Zivanovic Y."/>
            <person name="Allard G."/>
            <person name="Awayez M.J."/>
            <person name="Chan-Weiher C.C.-Y."/>
            <person name="Clausen I.G."/>
            <person name="Curtis B.A."/>
            <person name="De Moors A."/>
            <person name="Erauso G."/>
            <person name="Fletcher C."/>
            <person name="Gordon P.M.K."/>
            <person name="Heikamp-de Jong I."/>
            <person name="Jeffries A.C."/>
            <person name="Kozera C.J."/>
            <person name="Medina N."/>
            <person name="Peng X."/>
            <person name="Thi-Ngoc H.P."/>
            <person name="Redder P."/>
            <person name="Schenk M.E."/>
            <person name="Theriault C."/>
            <person name="Tolstrup N."/>
            <person name="Charlebois R.L."/>
            <person name="Doolittle W.F."/>
            <person name="Duguet M."/>
            <person name="Gaasterland T."/>
            <person name="Garrett R.A."/>
            <person name="Ragan M.A."/>
            <person name="Sensen C.W."/>
            <person name="Van der Oost J."/>
        </authorList>
    </citation>
    <scope>NUCLEOTIDE SEQUENCE [LARGE SCALE GENOMIC DNA]</scope>
    <source>
        <strain>ATCC 35092 / DSM 1617 / JCM 11322 / P2</strain>
    </source>
</reference>
<comment type="catalytic activity">
    <reaction evidence="1">
        <text>tRNA(Leu) + L-leucine + ATP = L-leucyl-tRNA(Leu) + AMP + diphosphate</text>
        <dbReference type="Rhea" id="RHEA:11688"/>
        <dbReference type="Rhea" id="RHEA-COMP:9613"/>
        <dbReference type="Rhea" id="RHEA-COMP:9622"/>
        <dbReference type="ChEBI" id="CHEBI:30616"/>
        <dbReference type="ChEBI" id="CHEBI:33019"/>
        <dbReference type="ChEBI" id="CHEBI:57427"/>
        <dbReference type="ChEBI" id="CHEBI:78442"/>
        <dbReference type="ChEBI" id="CHEBI:78494"/>
        <dbReference type="ChEBI" id="CHEBI:456215"/>
        <dbReference type="EC" id="6.1.1.4"/>
    </reaction>
</comment>
<comment type="subcellular location">
    <subcellularLocation>
        <location evidence="1">Cytoplasm</location>
    </subcellularLocation>
</comment>
<comment type="similarity">
    <text evidence="1">Belongs to the class-I aminoacyl-tRNA synthetase family.</text>
</comment>
<proteinExistence type="inferred from homology"/>
<name>SYL1_SACS2</name>
<sequence>MYSDFFNSIAFKWQAEWEKSKVFETNMDYSKPKFFITVPFPYTNSPMHVGHGRTYITADIYARYLRMKGYNVLFPFAFQFTGTPVLAIADSIRRGEVDVIEFFKNVYEVPQDKIKELEDPYKLAEYFKEEMKNTAKSIGMSIDWRRTFTTTDPRFEKFIHWQLGKLKELGYLVTEDDVVGYCPNDGFPVGMHDTRGDIEPEITTMNVIMFEGSDSYNFMVATSRPELIFGVVALMVNHDANYVVVEYEGKNFIISEKAYKKLSFQKNMKLVKTITTSDIVKLYAINPITGRKLEIIKNKYVDPSLGTGVVMSYPAHDPFHYLAMTETNKEFEVIPVVETEELDEIPGESAVLQTKNPYALKDFMESIYKTEYYKGYMKDIILSLVPDFLKQYVKENIVGKQVQEARKNTIELLKSLNIYDTIYEISNGPIYCRCGSEIVPKRIKDQWFIAYDNPKWKASALKAINNIELIPNPTKTELEKIVFNARKEPIGRSRGIGVKLPWDESQIVESLSDSTLYTLLYTVIYKMPINIEKEIFDFIFLGKGDAKELERKYGTDLIQLREEFLYWYPVDQRHTGRDLIQNHIPFYIYNHLAIFGEKYLPKRIVINGFVRVGGRKMSKSLRNIYTLSKAIKEFGVDPVRIALTSTSDLLQDLDFNENLVNPIAEQLKKIYDLIDRLLSINTEIKELRTADEWISSKVRDIIEKVNNNITSFKYRDAVNLLLYEIYEILRDYFDLVEIPNQEVIRKILSIWIRALAPFVPHIAEELWHKISSTFVSLEKYPEPNELNLYPDAILEISYINKIIENVRELEDIVHKKAEKVIIYINESEKVKELMKNAIKAVNEEIPLREFTANTEDKIAEKVYVVVSKLDKAIRDYLLNNEIDEEQIIVKNMNFLLRRLGVSEIVIYNAEDPTVPDVKGKKSQALPLSPAIVVE</sequence>
<gene>
    <name evidence="1" type="primary">leuS1</name>
    <name type="ordered locus">SSO0504</name>
</gene>
<accession>P58176</accession>
<protein>
    <recommendedName>
        <fullName evidence="1">Leucine--tRNA ligase 1</fullName>
        <ecNumber evidence="1">6.1.1.4</ecNumber>
    </recommendedName>
    <alternativeName>
        <fullName evidence="1">Leucyl-tRNA synthetase 1</fullName>
        <shortName evidence="1">LeuRS 1</shortName>
    </alternativeName>
</protein>
<evidence type="ECO:0000255" key="1">
    <source>
        <dbReference type="HAMAP-Rule" id="MF_00049"/>
    </source>
</evidence>
<organism>
    <name type="scientific">Saccharolobus solfataricus (strain ATCC 35092 / DSM 1617 / JCM 11322 / P2)</name>
    <name type="common">Sulfolobus solfataricus</name>
    <dbReference type="NCBI Taxonomy" id="273057"/>
    <lineage>
        <taxon>Archaea</taxon>
        <taxon>Thermoproteota</taxon>
        <taxon>Thermoprotei</taxon>
        <taxon>Sulfolobales</taxon>
        <taxon>Sulfolobaceae</taxon>
        <taxon>Saccharolobus</taxon>
    </lineage>
</organism>